<dbReference type="EC" id="3.2.1.15"/>
<dbReference type="EMBL" id="U05015">
    <property type="protein sequence ID" value="AAA85279.1"/>
    <property type="molecule type" value="mRNA"/>
</dbReference>
<dbReference type="SMR" id="P41749"/>
<dbReference type="CAZy" id="GH28">
    <property type="family name" value="Glycoside Hydrolase Family 28"/>
</dbReference>
<dbReference type="GlyCosmos" id="P41749">
    <property type="glycosylation" value="1 site, No reported glycans"/>
</dbReference>
<dbReference type="PHI-base" id="PHI:88"/>
<dbReference type="GO" id="GO:0005576">
    <property type="term" value="C:extracellular region"/>
    <property type="evidence" value="ECO:0007669"/>
    <property type="project" value="UniProtKB-SubCell"/>
</dbReference>
<dbReference type="GO" id="GO:0004650">
    <property type="term" value="F:polygalacturonase activity"/>
    <property type="evidence" value="ECO:0007669"/>
    <property type="project" value="UniProtKB-EC"/>
</dbReference>
<dbReference type="GO" id="GO:0071555">
    <property type="term" value="P:cell wall organization"/>
    <property type="evidence" value="ECO:0007669"/>
    <property type="project" value="UniProtKB-KW"/>
</dbReference>
<dbReference type="GO" id="GO:0045490">
    <property type="term" value="P:pectin catabolic process"/>
    <property type="evidence" value="ECO:0007669"/>
    <property type="project" value="UniProtKB-ARBA"/>
</dbReference>
<dbReference type="FunFam" id="2.160.20.10:FF:000002">
    <property type="entry name" value="Endopolygalacturonase D"/>
    <property type="match status" value="1"/>
</dbReference>
<dbReference type="Gene3D" id="2.160.20.10">
    <property type="entry name" value="Single-stranded right-handed beta-helix, Pectin lyase-like"/>
    <property type="match status" value="1"/>
</dbReference>
<dbReference type="InterPro" id="IPR000743">
    <property type="entry name" value="Glyco_hydro_28"/>
</dbReference>
<dbReference type="InterPro" id="IPR050434">
    <property type="entry name" value="Glycosyl_hydrlase_28"/>
</dbReference>
<dbReference type="InterPro" id="IPR006626">
    <property type="entry name" value="PbH1"/>
</dbReference>
<dbReference type="InterPro" id="IPR012334">
    <property type="entry name" value="Pectin_lyas_fold"/>
</dbReference>
<dbReference type="InterPro" id="IPR011050">
    <property type="entry name" value="Pectin_lyase_fold/virulence"/>
</dbReference>
<dbReference type="PANTHER" id="PTHR31884:SF13">
    <property type="entry name" value="ENDOPOLYGALACTURONASE B"/>
    <property type="match status" value="1"/>
</dbReference>
<dbReference type="PANTHER" id="PTHR31884">
    <property type="entry name" value="POLYGALACTURONASE"/>
    <property type="match status" value="1"/>
</dbReference>
<dbReference type="Pfam" id="PF00295">
    <property type="entry name" value="Glyco_hydro_28"/>
    <property type="match status" value="1"/>
</dbReference>
<dbReference type="SMART" id="SM00710">
    <property type="entry name" value="PbH1"/>
    <property type="match status" value="6"/>
</dbReference>
<dbReference type="SUPFAM" id="SSF51126">
    <property type="entry name" value="Pectin lyase-like"/>
    <property type="match status" value="1"/>
</dbReference>
<dbReference type="PROSITE" id="PS00502">
    <property type="entry name" value="POLYGALACTURONASE"/>
    <property type="match status" value="1"/>
</dbReference>
<gene>
    <name type="primary">pgaA</name>
    <name type="synonym">pecA</name>
</gene>
<comment type="function">
    <text>Involved in maceration and soft-rotting of plant tissue. Hydrolyzes the 1,4-alpha glycosidic bonds of de-esterified pectate in the smooth region of the plant cell wall.</text>
</comment>
<comment type="catalytic activity">
    <reaction>
        <text>(1,4-alpha-D-galacturonosyl)n+m + H2O = (1,4-alpha-D-galacturonosyl)n + (1,4-alpha-D-galacturonosyl)m.</text>
        <dbReference type="EC" id="3.2.1.15"/>
    </reaction>
</comment>
<comment type="subcellular location">
    <subcellularLocation>
        <location evidence="5">Secreted</location>
    </subcellularLocation>
</comment>
<comment type="induction">
    <text evidence="4">Expressed in both pectin- and glucose-grown mycelia.</text>
</comment>
<comment type="similarity">
    <text evidence="5">Belongs to the glycosyl hydrolase 28 family.</text>
</comment>
<sequence>MQLLQSSVIAATVGAALVAAVPVELEARDSCTFTSAADAKSGKTSCSTITLSNIEVPAGETLDLTGLNDGTTVIFSGETTFGYKEWEGPLISVSGTNIKVQQASGAKIDGDGSRWWDGKGGNGGKTKPKFCYVHKLDSSSITGLQIYNTPVQGFSIQSDNLNITDVTIDNSAGTAEGHNTDAFDVGSSTYINIDGATVYNQDDCLAINSGSHITFTNGYCDGGHGLSIGSVGGRSDNTVEDVTISNSKVVNSQNGVRIKTVYDATGTVSNVKFEDITLSGITKYGLIVEQDYENGSPTGTPTNGIKVSDITFDKVTGTVESDATDIYILCGSGSCTDWTWSGVSITGGKTSSKCENVPTGASC</sequence>
<proteinExistence type="evidence at transcript level"/>
<protein>
    <recommendedName>
        <fullName>Endopolygalacturonase A</fullName>
        <ecNumber>3.2.1.15</ecNumber>
    </recommendedName>
    <alternativeName>
        <fullName>P2C</fullName>
    </alternativeName>
    <alternativeName>
        <fullName>PGL</fullName>
    </alternativeName>
    <alternativeName>
        <fullName>Pectinase A</fullName>
    </alternativeName>
    <alternativeName>
        <fullName>Polygalacturonase A</fullName>
    </alternativeName>
</protein>
<organism>
    <name type="scientific">Aspergillus flavus (strain ATCC MYA-384 / AF70)</name>
    <dbReference type="NCBI Taxonomy" id="1392242"/>
    <lineage>
        <taxon>Eukaryota</taxon>
        <taxon>Fungi</taxon>
        <taxon>Dikarya</taxon>
        <taxon>Ascomycota</taxon>
        <taxon>Pezizomycotina</taxon>
        <taxon>Eurotiomycetes</taxon>
        <taxon>Eurotiomycetidae</taxon>
        <taxon>Eurotiales</taxon>
        <taxon>Aspergillaceae</taxon>
        <taxon>Aspergillus</taxon>
        <taxon>Aspergillus subgen. Circumdati</taxon>
    </lineage>
</organism>
<feature type="signal peptide" evidence="2">
    <location>
        <begin position="1"/>
        <end position="20"/>
    </location>
</feature>
<feature type="propeptide" id="PRO_0000024764" evidence="2">
    <location>
        <begin position="21"/>
        <end position="28"/>
    </location>
</feature>
<feature type="chain" id="PRO_0000024765" description="Endopolygalacturonase A">
    <location>
        <begin position="29"/>
        <end position="363"/>
    </location>
</feature>
<feature type="repeat" description="PbH1 1">
    <location>
        <begin position="158"/>
        <end position="187"/>
    </location>
</feature>
<feature type="repeat" description="PbH1 2">
    <location>
        <begin position="188"/>
        <end position="209"/>
    </location>
</feature>
<feature type="repeat" description="PbH1 3">
    <location>
        <begin position="210"/>
        <end position="230"/>
    </location>
</feature>
<feature type="repeat" description="PbH1 4">
    <location>
        <begin position="239"/>
        <end position="260"/>
    </location>
</feature>
<feature type="repeat" description="PbH1 5">
    <location>
        <begin position="268"/>
        <end position="290"/>
    </location>
</feature>
<feature type="repeat" description="PbH1 6">
    <location>
        <begin position="302"/>
        <end position="347"/>
    </location>
</feature>
<feature type="active site" description="Proton donor" evidence="3">
    <location>
        <position position="202"/>
    </location>
</feature>
<feature type="active site" evidence="3">
    <location>
        <position position="224"/>
    </location>
</feature>
<feature type="glycosylation site" description="N-linked (GlcNAc...) asparagine" evidence="2">
    <location>
        <position position="162"/>
    </location>
</feature>
<feature type="disulfide bond" evidence="1">
    <location>
        <begin position="31"/>
        <end position="46"/>
    </location>
</feature>
<feature type="disulfide bond" evidence="1">
    <location>
        <begin position="204"/>
        <end position="220"/>
    </location>
</feature>
<feature type="disulfide bond" evidence="1">
    <location>
        <begin position="330"/>
        <end position="335"/>
    </location>
</feature>
<feature type="disulfide bond" evidence="1">
    <location>
        <begin position="354"/>
        <end position="363"/>
    </location>
</feature>
<reference key="1">
    <citation type="journal article" date="1995" name="Appl. Environ. Microbiol.">
        <title>Isolation and characterization of polygalacturonase genes (pecA and pecB) from Aspergillus flavus.</title>
        <authorList>
            <person name="Whitehead M.P."/>
            <person name="Shieh M.T."/>
            <person name="Cleveland T.E."/>
            <person name="Cary J.W."/>
            <person name="Dean R.A."/>
        </authorList>
    </citation>
    <scope>NUCLEOTIDE SEQUENCE [MRNA]</scope>
    <scope>INDUCTION</scope>
    <source>
        <strain>ATCC MYA-384 / AF70</strain>
    </source>
</reference>
<accession>P41749</accession>
<keyword id="KW-0961">Cell wall biogenesis/degradation</keyword>
<keyword id="KW-1015">Disulfide bond</keyword>
<keyword id="KW-0325">Glycoprotein</keyword>
<keyword id="KW-0326">Glycosidase</keyword>
<keyword id="KW-0378">Hydrolase</keyword>
<keyword id="KW-0677">Repeat</keyword>
<keyword id="KW-0964">Secreted</keyword>
<keyword id="KW-0732">Signal</keyword>
<keyword id="KW-0865">Zymogen</keyword>
<evidence type="ECO:0000250" key="1"/>
<evidence type="ECO:0000255" key="2"/>
<evidence type="ECO:0000255" key="3">
    <source>
        <dbReference type="PROSITE-ProRule" id="PRU10052"/>
    </source>
</evidence>
<evidence type="ECO:0000269" key="4">
    <source>
    </source>
</evidence>
<evidence type="ECO:0000305" key="5"/>
<name>PGLRA_ASPFA</name>